<keyword id="KW-1003">Cell membrane</keyword>
<keyword id="KW-0963">Cytoplasm</keyword>
<keyword id="KW-1015">Disulfide bond</keyword>
<keyword id="KW-0325">Glycoprotein</keyword>
<keyword id="KW-0407">Ion channel</keyword>
<keyword id="KW-0406">Ion transport</keyword>
<keyword id="KW-0472">Membrane</keyword>
<keyword id="KW-0597">Phosphoprotein</keyword>
<keyword id="KW-1185">Reference proteome</keyword>
<keyword id="KW-0915">Sodium</keyword>
<keyword id="KW-0894">Sodium channel</keyword>
<keyword id="KW-0739">Sodium transport</keyword>
<keyword id="KW-0812">Transmembrane</keyword>
<keyword id="KW-1133">Transmembrane helix</keyword>
<keyword id="KW-0813">Transport</keyword>
<proteinExistence type="evidence at protein level"/>
<dbReference type="EMBL" id="AF013598">
    <property type="protein sequence ID" value="AAB69328.1"/>
    <property type="molecule type" value="mRNA"/>
</dbReference>
<dbReference type="RefSeq" id="NP_775158.1">
    <property type="nucleotide sequence ID" value="NM_173135.2"/>
</dbReference>
<dbReference type="SMR" id="O35240"/>
<dbReference type="DIP" id="DIP-35759N"/>
<dbReference type="FunCoup" id="O35240">
    <property type="interactions" value="28"/>
</dbReference>
<dbReference type="IntAct" id="O35240">
    <property type="interactions" value="5"/>
</dbReference>
<dbReference type="MINT" id="O35240"/>
<dbReference type="STRING" id="10116.ENSRNOP00000011300"/>
<dbReference type="BindingDB" id="O35240"/>
<dbReference type="ChEMBL" id="CHEMBL5757"/>
<dbReference type="TCDB" id="1.A.6.1.2">
    <property type="family name" value="the epithelial na(+) channel (enac) family"/>
</dbReference>
<dbReference type="GlyCosmos" id="O35240">
    <property type="glycosylation" value="2 sites, No reported glycans"/>
</dbReference>
<dbReference type="GlyGen" id="O35240">
    <property type="glycosylation" value="2 sites"/>
</dbReference>
<dbReference type="iPTMnet" id="O35240"/>
<dbReference type="PhosphoSitePlus" id="O35240"/>
<dbReference type="PaxDb" id="10116-ENSRNOP00000011300"/>
<dbReference type="Ensembl" id="ENSRNOT00000011300.3">
    <property type="protein sequence ID" value="ENSRNOP00000011300.1"/>
    <property type="gene ID" value="ENSRNOG00000008380.6"/>
</dbReference>
<dbReference type="GeneID" id="286920"/>
<dbReference type="KEGG" id="rno:286920"/>
<dbReference type="AGR" id="RGD:708578"/>
<dbReference type="CTD" id="9311"/>
<dbReference type="RGD" id="708578">
    <property type="gene designation" value="Asic3"/>
</dbReference>
<dbReference type="eggNOG" id="KOG4294">
    <property type="taxonomic scope" value="Eukaryota"/>
</dbReference>
<dbReference type="GeneTree" id="ENSGT00940000162081"/>
<dbReference type="HOGENOM" id="CLU_020415_1_2_1"/>
<dbReference type="InParanoid" id="O35240"/>
<dbReference type="OMA" id="GQFHHVT"/>
<dbReference type="OrthoDB" id="6021021at2759"/>
<dbReference type="PhylomeDB" id="O35240"/>
<dbReference type="TreeFam" id="TF330663"/>
<dbReference type="Reactome" id="R-RNO-2672351">
    <property type="pathway name" value="Stimuli-sensing channels"/>
</dbReference>
<dbReference type="PRO" id="PR:O35240"/>
<dbReference type="Proteomes" id="UP000002494">
    <property type="component" value="Chromosome 4"/>
</dbReference>
<dbReference type="Bgee" id="ENSRNOG00000008380">
    <property type="expression patterns" value="Expressed in cerebellum and 2 other cell types or tissues"/>
</dbReference>
<dbReference type="GO" id="GO:0048471">
    <property type="term" value="C:perinuclear region of cytoplasm"/>
    <property type="evidence" value="ECO:0000314"/>
    <property type="project" value="RGD"/>
</dbReference>
<dbReference type="GO" id="GO:0005886">
    <property type="term" value="C:plasma membrane"/>
    <property type="evidence" value="ECO:0000314"/>
    <property type="project" value="UniProtKB"/>
</dbReference>
<dbReference type="GO" id="GO:0042931">
    <property type="term" value="F:enterobactin transmembrane transporter activity"/>
    <property type="evidence" value="ECO:0000266"/>
    <property type="project" value="RGD"/>
</dbReference>
<dbReference type="GO" id="GO:0015280">
    <property type="term" value="F:ligand-gated sodium channel activity"/>
    <property type="evidence" value="ECO:0000314"/>
    <property type="project" value="MGI"/>
</dbReference>
<dbReference type="GO" id="GO:0005261">
    <property type="term" value="F:monoatomic cation channel activity"/>
    <property type="evidence" value="ECO:0000266"/>
    <property type="project" value="RGD"/>
</dbReference>
<dbReference type="GO" id="GO:0160126">
    <property type="term" value="F:pH-gated calcium channel activity"/>
    <property type="evidence" value="ECO:0000314"/>
    <property type="project" value="UniProtKB"/>
</dbReference>
<dbReference type="GO" id="GO:0160128">
    <property type="term" value="F:pH-gated monoatomic ion channel activity"/>
    <property type="evidence" value="ECO:0000266"/>
    <property type="project" value="RGD"/>
</dbReference>
<dbReference type="GO" id="GO:0160125">
    <property type="term" value="F:pH-gated sodium channel activity"/>
    <property type="evidence" value="ECO:0000314"/>
    <property type="project" value="UniProtKB"/>
</dbReference>
<dbReference type="GO" id="GO:0050907">
    <property type="term" value="P:detection of chemical stimulus involved in sensory perception"/>
    <property type="evidence" value="ECO:0000266"/>
    <property type="project" value="RGD"/>
</dbReference>
<dbReference type="GO" id="GO:0050968">
    <property type="term" value="P:detection of chemical stimulus involved in sensory perception of pain"/>
    <property type="evidence" value="ECO:0000314"/>
    <property type="project" value="UniProtKB"/>
</dbReference>
<dbReference type="GO" id="GO:0050974">
    <property type="term" value="P:detection of mechanical stimulus involved in sensory perception"/>
    <property type="evidence" value="ECO:0000266"/>
    <property type="project" value="RGD"/>
</dbReference>
<dbReference type="GO" id="GO:0050966">
    <property type="term" value="P:detection of mechanical stimulus involved in sensory perception of pain"/>
    <property type="evidence" value="ECO:0000266"/>
    <property type="project" value="RGD"/>
</dbReference>
<dbReference type="GO" id="GO:0050961">
    <property type="term" value="P:detection of temperature stimulus involved in sensory perception"/>
    <property type="evidence" value="ECO:0000266"/>
    <property type="project" value="RGD"/>
</dbReference>
<dbReference type="GO" id="GO:0050965">
    <property type="term" value="P:detection of temperature stimulus involved in sensory perception of pain"/>
    <property type="evidence" value="ECO:0000266"/>
    <property type="project" value="RGD"/>
</dbReference>
<dbReference type="GO" id="GO:0051649">
    <property type="term" value="P:establishment of localization in cell"/>
    <property type="evidence" value="ECO:0000266"/>
    <property type="project" value="RGD"/>
</dbReference>
<dbReference type="GO" id="GO:0051899">
    <property type="term" value="P:membrane depolarization"/>
    <property type="evidence" value="ECO:0000314"/>
    <property type="project" value="UniProtKB"/>
</dbReference>
<dbReference type="GO" id="GO:0006812">
    <property type="term" value="P:monoatomic cation transport"/>
    <property type="evidence" value="ECO:0000266"/>
    <property type="project" value="RGD"/>
</dbReference>
<dbReference type="GO" id="GO:0034220">
    <property type="term" value="P:monoatomic ion transmembrane transport"/>
    <property type="evidence" value="ECO:0000314"/>
    <property type="project" value="RGD"/>
</dbReference>
<dbReference type="GO" id="GO:0010447">
    <property type="term" value="P:response to acidic pH"/>
    <property type="evidence" value="ECO:0000314"/>
    <property type="project" value="MGI"/>
</dbReference>
<dbReference type="GO" id="GO:0009408">
    <property type="term" value="P:response to heat"/>
    <property type="evidence" value="ECO:0000266"/>
    <property type="project" value="RGD"/>
</dbReference>
<dbReference type="GO" id="GO:0009612">
    <property type="term" value="P:response to mechanical stimulus"/>
    <property type="evidence" value="ECO:0000266"/>
    <property type="project" value="RGD"/>
</dbReference>
<dbReference type="GO" id="GO:0050915">
    <property type="term" value="P:sensory perception of sour taste"/>
    <property type="evidence" value="ECO:0000266"/>
    <property type="project" value="RGD"/>
</dbReference>
<dbReference type="GO" id="GO:0035725">
    <property type="term" value="P:sodium ion transmembrane transport"/>
    <property type="evidence" value="ECO:0000318"/>
    <property type="project" value="GO_Central"/>
</dbReference>
<dbReference type="GO" id="GO:0006814">
    <property type="term" value="P:sodium ion transport"/>
    <property type="evidence" value="ECO:0000314"/>
    <property type="project" value="MGI"/>
</dbReference>
<dbReference type="FunFam" id="1.10.287.770:FF:000001">
    <property type="entry name" value="Acid-sensing ion channel subunit 1"/>
    <property type="match status" value="1"/>
</dbReference>
<dbReference type="Gene3D" id="1.10.3590.10">
    <property type="entry name" value="acid-sensing ion channel 1 domain"/>
    <property type="match status" value="2"/>
</dbReference>
<dbReference type="Gene3D" id="1.10.287.820">
    <property type="entry name" value="Acid-sensing ion channel domain"/>
    <property type="match status" value="1"/>
</dbReference>
<dbReference type="Gene3D" id="1.10.287.770">
    <property type="entry name" value="YojJ-like"/>
    <property type="match status" value="1"/>
</dbReference>
<dbReference type="InterPro" id="IPR001873">
    <property type="entry name" value="ENaC"/>
</dbReference>
<dbReference type="InterPro" id="IPR004724">
    <property type="entry name" value="ENaC_chordates"/>
</dbReference>
<dbReference type="InterPro" id="IPR020903">
    <property type="entry name" value="ENaC_CS"/>
</dbReference>
<dbReference type="NCBIfam" id="TIGR00859">
    <property type="entry name" value="ENaC"/>
    <property type="match status" value="1"/>
</dbReference>
<dbReference type="PANTHER" id="PTHR11690:SF228">
    <property type="entry name" value="ACID-SENSING ION CHANNEL 3"/>
    <property type="match status" value="1"/>
</dbReference>
<dbReference type="PANTHER" id="PTHR11690">
    <property type="entry name" value="AMILORIDE-SENSITIVE SODIUM CHANNEL-RELATED"/>
    <property type="match status" value="1"/>
</dbReference>
<dbReference type="Pfam" id="PF00858">
    <property type="entry name" value="ASC"/>
    <property type="match status" value="1"/>
</dbReference>
<dbReference type="PRINTS" id="PR01078">
    <property type="entry name" value="AMINACHANNEL"/>
</dbReference>
<dbReference type="PROSITE" id="PS01206">
    <property type="entry name" value="ASC"/>
    <property type="match status" value="1"/>
</dbReference>
<protein>
    <recommendedName>
        <fullName evidence="27">Acid-sensing ion channel 3</fullName>
        <shortName evidence="25">ASIC3</shortName>
    </recommendedName>
    <alternativeName>
        <fullName>Amiloride-sensitive cation channel 3</fullName>
    </alternativeName>
    <alternativeName>
        <fullName evidence="26">Dorsal root ASIC</fullName>
        <shortName evidence="26">DRASIC</shortName>
    </alternativeName>
</protein>
<accession>O35240</accession>
<evidence type="ECO:0000250" key="1">
    <source>
        <dbReference type="UniProtKB" id="P78348"/>
    </source>
</evidence>
<evidence type="ECO:0000250" key="2">
    <source>
        <dbReference type="UniProtKB" id="Q6X1Y6"/>
    </source>
</evidence>
<evidence type="ECO:0000250" key="3">
    <source>
        <dbReference type="UniProtKB" id="Q9UHC3"/>
    </source>
</evidence>
<evidence type="ECO:0000255" key="4"/>
<evidence type="ECO:0000256" key="5">
    <source>
        <dbReference type="SAM" id="MobiDB-lite"/>
    </source>
</evidence>
<evidence type="ECO:0000269" key="6">
    <source>
    </source>
</evidence>
<evidence type="ECO:0000269" key="7">
    <source>
    </source>
</evidence>
<evidence type="ECO:0000269" key="8">
    <source>
    </source>
</evidence>
<evidence type="ECO:0000269" key="9">
    <source>
    </source>
</evidence>
<evidence type="ECO:0000269" key="10">
    <source>
    </source>
</evidence>
<evidence type="ECO:0000269" key="11">
    <source>
    </source>
</evidence>
<evidence type="ECO:0000269" key="12">
    <source>
    </source>
</evidence>
<evidence type="ECO:0000269" key="13">
    <source>
    </source>
</evidence>
<evidence type="ECO:0000269" key="14">
    <source>
    </source>
</evidence>
<evidence type="ECO:0000269" key="15">
    <source>
    </source>
</evidence>
<evidence type="ECO:0000269" key="16">
    <source>
    </source>
</evidence>
<evidence type="ECO:0000269" key="17">
    <source>
    </source>
</evidence>
<evidence type="ECO:0000269" key="18">
    <source>
    </source>
</evidence>
<evidence type="ECO:0000269" key="19">
    <source>
    </source>
</evidence>
<evidence type="ECO:0000269" key="20">
    <source>
    </source>
</evidence>
<evidence type="ECO:0000269" key="21">
    <source>
    </source>
</evidence>
<evidence type="ECO:0000269" key="22">
    <source>
    </source>
</evidence>
<evidence type="ECO:0000269" key="23">
    <source>
    </source>
</evidence>
<evidence type="ECO:0000269" key="24">
    <source>
    </source>
</evidence>
<evidence type="ECO:0000303" key="25">
    <source>
    </source>
</evidence>
<evidence type="ECO:0000303" key="26">
    <source>
    </source>
</evidence>
<evidence type="ECO:0000305" key="27"/>
<evidence type="ECO:0000305" key="28">
    <source>
    </source>
</evidence>
<evidence type="ECO:0000312" key="29">
    <source>
        <dbReference type="RGD" id="708578"/>
    </source>
</evidence>
<feature type="chain" id="PRO_0000181303" description="Acid-sensing ion channel 3">
    <location>
        <begin position="1"/>
        <end position="533"/>
    </location>
</feature>
<feature type="topological domain" description="Cytoplasmic" evidence="3">
    <location>
        <begin position="1"/>
        <end position="19"/>
    </location>
</feature>
<feature type="transmembrane region" description="Helical" evidence="4">
    <location>
        <begin position="20"/>
        <end position="40"/>
    </location>
</feature>
<feature type="topological domain" description="Extracellular" evidence="3">
    <location>
        <begin position="41"/>
        <end position="435"/>
    </location>
</feature>
<feature type="transmembrane region" description="Helical" evidence="4">
    <location>
        <begin position="436"/>
        <end position="456"/>
    </location>
</feature>
<feature type="topological domain" description="Cytoplasmic" evidence="3">
    <location>
        <begin position="457"/>
        <end position="533"/>
    </location>
</feature>
<feature type="region of interest" description="Disordered" evidence="5">
    <location>
        <begin position="286"/>
        <end position="310"/>
    </location>
</feature>
<feature type="short sequence motif" description="GAS motif; ion selectivity filter" evidence="1">
    <location>
        <begin position="449"/>
        <end position="451"/>
    </location>
</feature>
<feature type="short sequence motif" description="PDZ-binding" evidence="3">
    <location>
        <begin position="530"/>
        <end position="533"/>
    </location>
</feature>
<feature type="modified residue" description="Phosphothreonine; by PKC" evidence="28">
    <location>
        <position position="40"/>
    </location>
</feature>
<feature type="modified residue" description="Phosphoserine; by PKC" evidence="28">
    <location>
        <position position="523"/>
    </location>
</feature>
<feature type="glycosylation site" description="N-linked (GlcNAc...) asparagine" evidence="4">
    <location>
        <position position="176"/>
    </location>
</feature>
<feature type="glycosylation site" description="N-linked (GlcNAc...) asparagine" evidence="4">
    <location>
        <position position="400"/>
    </location>
</feature>
<feature type="disulfide bond" evidence="1">
    <location>
        <begin position="93"/>
        <end position="187"/>
    </location>
</feature>
<feature type="disulfide bond" evidence="1">
    <location>
        <begin position="165"/>
        <end position="172"/>
    </location>
</feature>
<feature type="disulfide bond" evidence="1">
    <location>
        <begin position="283"/>
        <end position="372"/>
    </location>
</feature>
<feature type="disulfide bond" evidence="1">
    <location>
        <begin position="317"/>
        <end position="368"/>
    </location>
</feature>
<feature type="disulfide bond" evidence="1">
    <location>
        <begin position="321"/>
        <end position="366"/>
    </location>
</feature>
<feature type="disulfide bond" evidence="1">
    <location>
        <begin position="330"/>
        <end position="352"/>
    </location>
</feature>
<feature type="disulfide bond" evidence="1">
    <location>
        <begin position="332"/>
        <end position="344"/>
    </location>
</feature>
<feature type="mutagenesis site" description="No effect on ion selectivity or channel function." evidence="6">
    <original>V</original>
    <variation>P</variation>
    <location>
        <position position="20"/>
    </location>
</feature>
<feature type="mutagenesis site" description="Loss of channel function." evidence="6">
    <original>F</original>
    <variation>S</variation>
    <location>
        <position position="21"/>
    </location>
</feature>
<feature type="mutagenesis site" description="Alters selectivity of the channel for sodium. No effect on channel function." evidence="6">
    <original>T</original>
    <variation>K</variation>
    <location>
        <position position="26"/>
    </location>
</feature>
<feature type="mutagenesis site" description="Loss of regulation by PKC; when associated with G-523." evidence="17">
    <original>T</original>
    <variation>G</variation>
    <location>
        <position position="40"/>
    </location>
</feature>
<feature type="mutagenesis site" description="Loss of regulation by PKC; when associated with G-40." evidence="17">
    <original>S</original>
    <variation>G</variation>
    <location>
        <position position="523"/>
    </location>
</feature>
<comment type="function">
    <text evidence="2 7 8 10 21 22 23">Forms pH-gated heterotrimeric sodium channels that act as postsynaptic excitatory receptors in the nervous system (PubMed:10842183, PubMed:11120882, PubMed:11587714, PubMed:9261094). Upon extracellular acidification, these channels generate a biphasic current with a fast inactivating and a slow sustained phase (PubMed:10842183, PubMed:11120882). ASIC3 is more sensitive to protons and gates between closed, open, and desensitized states faster than other ASICs (PubMed:11120882). Displays high selectivity for sodium ions but can also permit the permeation of other cations (PubMed:10842183, PubMed:11120882). As a neuronal acid sensor, probably contributes to mechanoreception, acid nociception, and heat nociception (By similarity). By forming heterotrimeric channels with ASIC2, generates a biphasic current with a fast inactivating and a slow sustained phase, which in sensory neurons is proposed to mediate the pain induced by acidosis that occurs in ischemic, damaged or inflamed tissues (PubMed:10842183, PubMed:11120882, PubMed:28396446, PubMed:9368048).</text>
</comment>
<comment type="catalytic activity">
    <reaction evidence="7 8 22 23">
        <text>Na(+)(in) = Na(+)(out)</text>
        <dbReference type="Rhea" id="RHEA:34963"/>
        <dbReference type="ChEBI" id="CHEBI:29101"/>
    </reaction>
</comment>
<comment type="catalytic activity">
    <reaction evidence="23">
        <text>K(+)(in) = K(+)(out)</text>
        <dbReference type="Rhea" id="RHEA:29463"/>
        <dbReference type="ChEBI" id="CHEBI:29103"/>
    </reaction>
</comment>
<comment type="catalytic activity">
    <reaction evidence="8">
        <text>Ca(2+)(in) = Ca(2+)(out)</text>
        <dbReference type="Rhea" id="RHEA:29671"/>
        <dbReference type="ChEBI" id="CHEBI:29108"/>
    </reaction>
</comment>
<comment type="activity regulation">
    <text evidence="7 8 9 10 11 14 15 18 21 22">Inhibited by the diuretic drug amiloride (PubMed:10842183, PubMed:9261094). Inhibited by gadolinium ions (PubMed:10842183). Inhibited by extracellular Ca(2+) (PubMed:11120882, PubMed:12526774). Activated by lactate (PubMed:11528414, PubMed:12526774). Salicylic acid, diclofenac and aspirin inhibit the sustained current component (PubMed:11588175). Activated by the vertebrate neuropeptides NPFF and NPSF, and the related FMRFamide (PubMed:11587714, PubMed:12668052). Specifically and reversibly inhibited by the a sea anemone toxin APETx2 (PubMed:15044953). ASIC3-containing channels are potentiated by the cono-RFamide CNF-Tx1.1, and probably CNF-Tx1.2 and CNF-Tx1.3 (AC P0DL71) (PubMed:28396446).</text>
</comment>
<comment type="subunit">
    <text evidence="3 7 10 19 20 23">Can form homotrimeric channels (PubMed:10842183). Heterotrimer; forms functional heterotrimers producing channel with different properties (PubMed:11587714). Forms heterotrimers with ASIC2; gives rise to a biphasic current with a sustained current which discriminates poorly between Na(+) and K(+) (PubMed:10842183, PubMed:11587714, PubMed:9368048). Interacts with STOM; inhibits ASIC3 acid-evoked current (PubMed:22850675). Interacts with LIN7B (via PDZ domain); increases ASIC3 expression at the plasma membrane (By similarity). Interacts with MAGI1 (via PDZ domain); probably regulates ASIC3 (By similarity). Interacts with GOPC (via PDZ domain); probably regulates ASIC3 (By similarity). Interacts with DLG4 (via PDZ domain); reduces ASIC3 expression at the plasma membrane (PubMed:15317815).</text>
</comment>
<comment type="interaction">
    <interactant intactId="EBI-982374">
        <id>O35240</id>
    </interactant>
    <interactant intactId="EBI-982391">
        <id>Q9JJ19</id>
        <label>Nherf1</label>
    </interactant>
    <organismsDiffer>false</organismsDiffer>
    <experiments>5</experiments>
</comment>
<comment type="interaction">
    <interactant intactId="EBI-982374">
        <id>O35240</id>
    </interactant>
    <interactant intactId="EBI-982439">
        <id>Q920G2</id>
        <label>Nherf2</label>
    </interactant>
    <organismsDiffer>false</organismsDiffer>
    <experiments>2</experiments>
</comment>
<comment type="interaction">
    <interactant intactId="EBI-982374">
        <id>O35240</id>
    </interactant>
    <interactant intactId="EBI-15615743">
        <id>D4A100</id>
        <label>Stoml3</label>
    </interactant>
    <organismsDiffer>false</organismsDiffer>
    <experiments>2</experiments>
</comment>
<comment type="interaction">
    <interactant intactId="EBI-982374">
        <id>O35240</id>
    </interactant>
    <interactant intactId="EBI-8158524">
        <id>Q63ZW7-3</id>
        <label>Patj</label>
    </interactant>
    <organismsDiffer>true</organismsDiffer>
    <experiments>2</experiments>
</comment>
<comment type="interaction">
    <interactant intactId="EBI-982374">
        <id>O35240</id>
    </interactant>
    <interactant intactId="EBI-8004826">
        <id>P54116</id>
        <label>Stom</label>
    </interactant>
    <organismsDiffer>true</organismsDiffer>
    <experiments>3</experiments>
</comment>
<comment type="subcellular location">
    <subcellularLocation>
        <location evidence="7 12 19 22">Cell membrane</location>
        <topology evidence="4">Multi-pass membrane protein</topology>
    </subcellularLocation>
    <subcellularLocation>
        <location evidence="2">Cytoplasm</location>
    </subcellularLocation>
    <text evidence="2 12">Preferentially expressed at the plasma membrane of the soma and cellular processes of neurons (PubMed:11842212). In part cytoplasmic in cochlea cells (By similarity). Localized in specialized sensory nerve endings (By similarity).</text>
</comment>
<comment type="tissue specificity">
    <text evidence="7 12 22 24">Expressed in sciatic nerve and dorsal root ganglion (at protein level) (PubMed:11842212). Expressed in sensory neurons of dorsal root ganglion. Expressed in Golgi interneurons in the granular layer. Also found in superior cervical ganglia, spinal cord and brain stem.</text>
</comment>
<comment type="developmental stage">
    <text evidence="16">Expression is first detected at 15.5 dpc. Strongly expressed perinatally.</text>
</comment>
<comment type="induction">
    <text evidence="11 13 16">Transcriptionally regulated by the proinflammatory mediators nerve growth factor (NGF), serotonin, interleukin-1 and bradykinin (PubMed:12486159, PubMed:14522957). Up-regulation upon tissue inflammation is abolished by anti-inflammatory drugs (PubMed:11588175).</text>
</comment>
<comment type="domain">
    <text evidence="3">The PDZ-binding motif mediates the interaction with PDZ-domain containing proteins including DLG4, GOPC, MAGI1 and LIN7A.</text>
</comment>
<comment type="PTM">
    <text evidence="17">Could be phosphorylated by PKC, promoting activation of ASIC2/ASIC3 heterotrimers.</text>
</comment>
<comment type="similarity">
    <text evidence="27">Belongs to the amiloride-sensitive sodium channel (TC 1.A.6) family. ASIC3 subfamily.</text>
</comment>
<sequence>MKPRSGLEEAQRRQASDIRVFASSCTMHGLGHIFGPGGLTLRRGLWATAVLLSLAAFLYQVAERVRYYGEFHHKTTLDERESHQLTFPAVTLCNINPLRRSRLTPNDLHWAGTALLGLDPAEHAAYLRALGQPPAPPGFMPSPTFDMAQLYARAGHSLEDMLLDCRYRGQPCGPENFTVIFTRMGQCYTFNSGAHGAELLTTPKGGAGNGLEIMLDVQQEEYLPIWKDMEETPFEVGIRVQIHSQDEPPAIDQLGFGAAPGHQTFVSCQQQQLSFLPPPWGDCNTASLDPDDFDPEPSDPLGSPRPRPSPPYSLIGCRLACESRYVARKCGCRMMHMPGNSPVCSPQQYKDCASPALDAMLRKDTCVCPNPCATTRYAKELSMVRIPSRASARYLARKYNRSESYITENVLVLDIFFEALNYEAVEQKAAYEVSELLGDIGGQMGLFIGASLLTILEILDYLCEVFQDRVLGYFWNRRSAQKRSGNTLLQEELNGHRTHVPHLSLGPRPPTTPCAVTKTLSASHRTCYLVTRL</sequence>
<organism>
    <name type="scientific">Rattus norvegicus</name>
    <name type="common">Rat</name>
    <dbReference type="NCBI Taxonomy" id="10116"/>
    <lineage>
        <taxon>Eukaryota</taxon>
        <taxon>Metazoa</taxon>
        <taxon>Chordata</taxon>
        <taxon>Craniata</taxon>
        <taxon>Vertebrata</taxon>
        <taxon>Euteleostomi</taxon>
        <taxon>Mammalia</taxon>
        <taxon>Eutheria</taxon>
        <taxon>Euarchontoglires</taxon>
        <taxon>Glires</taxon>
        <taxon>Rodentia</taxon>
        <taxon>Myomorpha</taxon>
        <taxon>Muroidea</taxon>
        <taxon>Muridae</taxon>
        <taxon>Murinae</taxon>
        <taxon>Rattus</taxon>
    </lineage>
</organism>
<gene>
    <name evidence="29" type="primary">Asic3</name>
    <name evidence="29" type="synonym">Accn3</name>
    <name evidence="26" type="synonym">Drasic</name>
</gene>
<reference key="1">
    <citation type="journal article" date="1997" name="J. Biol. Chem.">
        <title>Molecular cloning of a non-inactivating proton-gated Na+ channel specific for sensory neurons.</title>
        <authorList>
            <person name="Waldmann R."/>
            <person name="Bassilana F."/>
            <person name="de Weille J.R."/>
            <person name="Champigny G."/>
            <person name="Heurteaux C."/>
            <person name="Lazdunski M."/>
        </authorList>
    </citation>
    <scope>NUCLEOTIDE SEQUENCE [MRNA]</scope>
    <scope>FUNCTION</scope>
    <scope>TRANSPORTER ACTIVITY</scope>
    <scope>ACTIVITY REGULATION</scope>
    <scope>SUBCELLULAR LOCATION</scope>
    <scope>TISSUE SPECIFICITY</scope>
</reference>
<reference key="2">
    <citation type="journal article" date="1997" name="J. Biol. Chem.">
        <title>A modulatory subunit of acid sensing ion channels in brain and dorsal root ganglion cells.</title>
        <authorList>
            <person name="Lingueglia E."/>
            <person name="de Weille J.R."/>
            <person name="Bassilana F."/>
            <person name="Heurteaux C."/>
            <person name="Sakai H."/>
            <person name="Waldmann R."/>
            <person name="Lazdunski M."/>
        </authorList>
    </citation>
    <scope>FUNCTION</scope>
    <scope>TRANSPORTER ACTIVITY</scope>
    <scope>SUBUNIT</scope>
    <source>
        <strain>Wistar</strain>
        <tissue>Brain</tissue>
    </source>
</reference>
<reference key="3">
    <citation type="journal article" date="1998" name="Proc. Natl. Acad. Sci. U.S.A.">
        <title>A sensory neuron-specific, proton-gated ion channel.</title>
        <authorList>
            <person name="Chen C.-C."/>
            <person name="England S."/>
            <person name="Akopian A.N."/>
            <person name="Wood J.N."/>
        </authorList>
    </citation>
    <scope>TISSUE SPECIFICITY</scope>
</reference>
<reference key="4">
    <citation type="journal article" date="1999" name="J. Biol. Chem.">
        <title>The pre-transmembrane 1 domain of acid-sensing ion channels participates in the ion pore.</title>
        <authorList>
            <person name="Coscoy S."/>
            <person name="de Weille J.R."/>
            <person name="Lingueglia E."/>
            <person name="Lazdunski M."/>
        </authorList>
    </citation>
    <scope>MUTAGENESIS OF VAL-20; PHE-21 AND THR-26</scope>
</reference>
<reference key="5">
    <citation type="journal article" date="2000" name="J. Biol. Chem.">
        <title>Mammalian ASIC2a and ASIC3 subunits co-assemble into heteromeric proton-gated channels sensitive to Gd3+.</title>
        <authorList>
            <person name="Babinski K."/>
            <person name="Catarsi S."/>
            <person name="Biagini G."/>
            <person name="Seguela P."/>
        </authorList>
    </citation>
    <scope>FUNCTION</scope>
    <scope>TRANSPORTER ACTIVITY</scope>
    <scope>ACTIVITY REGULATION</scope>
    <scope>SUBUNIT</scope>
    <scope>SUBCELLULAR LOCATION</scope>
    <scope>TISSUE SPECIFICITY</scope>
</reference>
<reference key="6">
    <citation type="journal article" date="2001" name="J. Neurosci.">
        <title>Nonsteroid anti-inflammatory drugs inhibit both the activity and the inflammation-induced expression of acid-sensing ion channels in nociceptors.</title>
        <authorList>
            <person name="Voilley N."/>
            <person name="de Weille J.R."/>
            <person name="Mamet J."/>
            <person name="Lazdunski M."/>
        </authorList>
    </citation>
    <scope>INDUCTION</scope>
    <scope>ACTIVITY REGULATION</scope>
</reference>
<reference key="7">
    <citation type="journal article" date="2001" name="Nat. Neurosci.">
        <title>Lactate enhances the acid-sensing Na+ channel on ischemia-sensing neurons.</title>
        <authorList>
            <person name="Immke D.C."/>
            <person name="McCleskey E.W."/>
        </authorList>
    </citation>
    <scope>ACTIVITY REGULATION BY LACTATE</scope>
</reference>
<reference key="8">
    <citation type="journal article" date="2001" name="Neuropharmacology">
        <title>Selective modulation of heteromeric ASIC proton-gated channels by neuropeptide FF.</title>
        <authorList>
            <person name="Catarsi S."/>
            <person name="Babinski K."/>
            <person name="Seguela P."/>
        </authorList>
    </citation>
    <scope>FUNCTION</scope>
    <scope>ACTIVITY REGULATION BY NPFF</scope>
    <scope>SUBUNIT</scope>
</reference>
<reference key="9">
    <citation type="journal article" date="2001" name="Proc. Natl. Acad. Sci. U.S.A.">
        <title>Acid-sensing ion channel 3 matches the acid-gated current in cardiac ischemia-sensing neurons.</title>
        <authorList>
            <person name="Sutherland S.P."/>
            <person name="Benson C.J."/>
            <person name="Adelman J.P."/>
            <person name="McCleskey E.W."/>
        </authorList>
    </citation>
    <scope>FUNCTION</scope>
    <scope>TRANSPORTER ACTIVITY</scope>
    <scope>ACTIVITY REGULATION</scope>
</reference>
<reference key="10">
    <citation type="journal article" date="2002" name="J. Neurosci.">
        <title>Proinflammatory mediators, stimulators of sensory neuron excitability via the expression of acid-sensing ion channels.</title>
        <authorList>
            <person name="Mamet J."/>
            <person name="Baron A."/>
            <person name="Lazdunski M."/>
            <person name="Voilley N."/>
        </authorList>
    </citation>
    <scope>INDUCTION</scope>
</reference>
<reference key="11">
    <citation type="journal article" date="2002" name="Proc. Natl. Acad. Sci. U.S.A.">
        <title>Functional implications of the localization and activity of acid-sensitive channels in rat peripheral nervous system.</title>
        <authorList>
            <person name="Alvarez de la Rosa D."/>
            <person name="Zhang P."/>
            <person name="Shao D."/>
            <person name="White F."/>
            <person name="Canessa C.M."/>
        </authorList>
    </citation>
    <scope>SUBCELLULAR LOCATION</scope>
    <scope>TISSUE SPECIFICITY</scope>
</reference>
<reference key="12">
    <citation type="journal article" date="2003" name="J. Biol. Chem.">
        <title>How nerve growth factor drives physiological and inflammatory expressions of acid-sensing ion channel 3 in sensory neurons.</title>
        <authorList>
            <person name="Mamet J."/>
            <person name="Lazdunski M."/>
            <person name="Voilley N."/>
        </authorList>
    </citation>
    <scope>DEVELOPMENTAL STAGE</scope>
    <scope>INDUCTION BY NGF</scope>
</reference>
<reference key="13">
    <citation type="journal article" date="2003" name="Neuron">
        <title>Protons open acid-sensing ion channels by catalyzing relief of Ca2+ blockade.</title>
        <authorList>
            <person name="Immke D.C."/>
            <person name="McCleskey E.W."/>
        </authorList>
    </citation>
    <scope>ACTIVITY REGULATION BY LACTATE AND CALCIUM</scope>
</reference>
<reference key="14">
    <citation type="journal article" date="2003" name="Neuropharmacology">
        <title>Effects of neuropeptide SF and related peptides on acid sensing ion channel 3 and sensory neuron excitability.</title>
        <authorList>
            <person name="Deval E."/>
            <person name="Baron A."/>
            <person name="Lingueglia E."/>
            <person name="Mazarguil H."/>
            <person name="Zajac J.-M."/>
            <person name="Lazdunski M."/>
        </authorList>
    </citation>
    <scope>ACTIVITY REGULATION</scope>
</reference>
<reference key="15">
    <citation type="journal article" date="2004" name="EMBO J.">
        <title>A new sea anemone peptide, APETx2, inhibits ASIC3, a major acid-sensitive channel in sensory neurons.</title>
        <authorList>
            <person name="Diochot S."/>
            <person name="Baron A."/>
            <person name="Rash L.D."/>
            <person name="Deval E."/>
            <person name="Escoubas P."/>
            <person name="Scarzello S."/>
            <person name="Salinas M."/>
            <person name="Lazdunski M."/>
        </authorList>
    </citation>
    <scope>ACTIVITY REGULATION BY APETX2 TOXIN</scope>
</reference>
<reference key="16">
    <citation type="journal article" date="2004" name="J. Biol. Chem.">
        <title>ASIC2b-dependent regulation of ASIC3, an essential acid-sensing ion channel subunit in sensory neurons via the partner protein PICK-1.</title>
        <authorList>
            <person name="Deval E."/>
            <person name="Salinas M."/>
            <person name="Baron A."/>
            <person name="Lingueglia E."/>
            <person name="Lazdunski M."/>
        </authorList>
    </citation>
    <scope>PHOSPHORYLATION AT THR-40 AND SER-523</scope>
    <scope>MUTAGENESIS OF THR-40 AND SER-523</scope>
</reference>
<reference key="17">
    <citation type="journal article" date="2004" name="J. Biol. Chem.">
        <title>PSD-95 and Lin-7b interact with acid-sensing ion channel-3 and have opposite effects on H+- gated current.</title>
        <authorList>
            <person name="Hruska-Hageman A.M."/>
            <person name="Benson C.J."/>
            <person name="Leonard A.S."/>
            <person name="Price M.P."/>
            <person name="Welsh M.J."/>
        </authorList>
    </citation>
    <scope>INTERACTION WITH DLG4</scope>
    <scope>SUBCELLULAR LOCATION</scope>
</reference>
<reference key="18">
    <citation type="journal article" date="2012" name="EMBO J.">
        <title>A stomatin dimer modulates the activity of acid-sensing ion channels.</title>
        <authorList>
            <person name="Brand J."/>
            <person name="Smith E.S."/>
            <person name="Schwefel D."/>
            <person name="Lapatsina L."/>
            <person name="Poole K."/>
            <person name="Omerbasic D."/>
            <person name="Kozlenkov A."/>
            <person name="Behlke J."/>
            <person name="Lewin G.R."/>
            <person name="Daumke O."/>
        </authorList>
    </citation>
    <scope>INTERACTION WITH STOM</scope>
</reference>
<reference key="19">
    <citation type="journal article" date="2017" name="Proc. Natl. Acad. Sci. U.S.A.">
        <title>Identification of a cono-RFamide from the venom of Conus textile that targets ASIC3 and enhances muscle pain.</title>
        <authorList>
            <person name="Reimers C."/>
            <person name="Lee C.H."/>
            <person name="Kalbacher H."/>
            <person name="Tian Y."/>
            <person name="Hung C.H."/>
            <person name="Schmidt A."/>
            <person name="Prokop L."/>
            <person name="Kauferstein S."/>
            <person name="Mebs D."/>
            <person name="Chen C.C."/>
            <person name="Gruender S."/>
        </authorList>
    </citation>
    <scope>FUNCTION</scope>
    <scope>ACTIVITY REGULATION BY CONO-RFAMIDE CNF-TX1.1</scope>
</reference>
<name>ASIC3_RAT</name>